<name>TO1C_HADVE</name>
<sequence>SSTCIPSGQPCPYNENCCSQSCTFKENENGNTVKRCD</sequence>
<reference key="1">
    <citation type="journal article" date="1999" name="Eur. J. Biochem.">
        <title>Structure-function studies of omega-atracotoxin, a potent antagonist of insect voltage-gated calcium channels.</title>
        <authorList>
            <person name="Wang X.-H."/>
            <person name="Smith R."/>
            <person name="Fletcher J.I."/>
            <person name="Wilson H."/>
            <person name="Wood C.J."/>
            <person name="Merlin E.H."/>
            <person name="King G.F."/>
        </authorList>
    </citation>
    <scope>PROTEIN SEQUENCE</scope>
    <scope>SUBCELLULAR LOCATION</scope>
    <source>
        <tissue>Venom</tissue>
    </source>
</reference>
<evidence type="ECO:0000250" key="1">
    <source>
        <dbReference type="UniProtKB" id="P56207"/>
    </source>
</evidence>
<evidence type="ECO:0000269" key="2">
    <source>
    </source>
</evidence>
<evidence type="ECO:0000303" key="3">
    <source>
    </source>
</evidence>
<evidence type="ECO:0000305" key="4"/>
<evidence type="ECO:0000305" key="5">
    <source>
    </source>
</evidence>
<organism>
    <name type="scientific">Hadronyche versuta</name>
    <name type="common">Blue mountains funnel-web spider</name>
    <name type="synonym">Atrax versutus</name>
    <dbReference type="NCBI Taxonomy" id="6904"/>
    <lineage>
        <taxon>Eukaryota</taxon>
        <taxon>Metazoa</taxon>
        <taxon>Ecdysozoa</taxon>
        <taxon>Arthropoda</taxon>
        <taxon>Chelicerata</taxon>
        <taxon>Arachnida</taxon>
        <taxon>Araneae</taxon>
        <taxon>Mygalomorphae</taxon>
        <taxon>Hexathelidae</taxon>
        <taxon>Hadronyche</taxon>
    </lineage>
</organism>
<proteinExistence type="evidence at protein level"/>
<accession>P81596</accession>
<keyword id="KW-0108">Calcium channel impairing toxin</keyword>
<keyword id="KW-0903">Direct protein sequencing</keyword>
<keyword id="KW-1015">Disulfide bond</keyword>
<keyword id="KW-0872">Ion channel impairing toxin</keyword>
<keyword id="KW-0960">Knottin</keyword>
<keyword id="KW-0528">Neurotoxin</keyword>
<keyword id="KW-0964">Secreted</keyword>
<keyword id="KW-0800">Toxin</keyword>
<keyword id="KW-1218">Voltage-gated calcium channel impairing toxin</keyword>
<comment type="function">
    <text evidence="1">Inhibits insect, but not mammalian, voltage-gated calcium channels (Cav).</text>
</comment>
<comment type="subcellular location">
    <subcellularLocation>
        <location evidence="2">Secreted</location>
    </subcellularLocation>
</comment>
<comment type="tissue specificity">
    <text evidence="5">Expressed by the venom gland.</text>
</comment>
<comment type="domain">
    <text evidence="1">The presence of a 'disulfide through disulfide knot' structurally defines this protein as a knottin.</text>
</comment>
<comment type="similarity">
    <text evidence="4">Belongs to the neurotoxin 08 (Shiva) family. 01 (omega toxin) subfamily.</text>
</comment>
<feature type="peptide" id="PRO_0000044990" description="Omega-hexatoxin-Hv1c" evidence="2">
    <location>
        <begin position="1"/>
        <end position="37"/>
    </location>
</feature>
<feature type="site" description="Critical for insecticidal activity" evidence="1">
    <location>
        <position position="10"/>
    </location>
</feature>
<feature type="site" description="Critical for insecticidal activity" evidence="1">
    <location>
        <position position="27"/>
    </location>
</feature>
<feature type="site" description="Critical for insecticidal activity" evidence="1">
    <location>
        <position position="35"/>
    </location>
</feature>
<feature type="disulfide bond" evidence="1">
    <location>
        <begin position="4"/>
        <end position="18"/>
    </location>
</feature>
<feature type="disulfide bond" evidence="1">
    <location>
        <begin position="11"/>
        <end position="22"/>
    </location>
</feature>
<feature type="disulfide bond" evidence="1">
    <location>
        <begin position="17"/>
        <end position="36"/>
    </location>
</feature>
<dbReference type="BMRB" id="P81596"/>
<dbReference type="SMR" id="P81596"/>
<dbReference type="ArachnoServer" id="AS000198">
    <property type="toxin name" value="omega-hexatoxin-Hv1c"/>
</dbReference>
<dbReference type="GO" id="GO:0005576">
    <property type="term" value="C:extracellular region"/>
    <property type="evidence" value="ECO:0007669"/>
    <property type="project" value="UniProtKB-SubCell"/>
</dbReference>
<dbReference type="GO" id="GO:0019855">
    <property type="term" value="F:calcium channel inhibitor activity"/>
    <property type="evidence" value="ECO:0007669"/>
    <property type="project" value="InterPro"/>
</dbReference>
<dbReference type="GO" id="GO:0090729">
    <property type="term" value="F:toxin activity"/>
    <property type="evidence" value="ECO:0007669"/>
    <property type="project" value="UniProtKB-KW"/>
</dbReference>
<dbReference type="GO" id="GO:0006952">
    <property type="term" value="P:defense response"/>
    <property type="evidence" value="ECO:0007669"/>
    <property type="project" value="InterPro"/>
</dbReference>
<dbReference type="InterPro" id="IPR009415">
    <property type="entry name" value="Omega-atracotox"/>
</dbReference>
<dbReference type="InterPro" id="IPR018071">
    <property type="entry name" value="Omega-atracotox_CS"/>
</dbReference>
<dbReference type="Pfam" id="PF06357">
    <property type="entry name" value="Omega-toxin"/>
    <property type="match status" value="1"/>
</dbReference>
<dbReference type="SUPFAM" id="SSF57059">
    <property type="entry name" value="omega toxin-like"/>
    <property type="match status" value="1"/>
</dbReference>
<dbReference type="PROSITE" id="PS60016">
    <property type="entry name" value="OMEGA_ACTX_1"/>
    <property type="match status" value="1"/>
</dbReference>
<protein>
    <recommendedName>
        <fullName evidence="4">Omega-hexatoxin-Hv1c</fullName>
        <shortName evidence="4">Omega-HXTX-Hv1c</shortName>
    </recommendedName>
    <alternativeName>
        <fullName evidence="3">Omega-atracotoxin-Hv1c</fullName>
        <shortName evidence="3">Omega-AcTx-Hv1c</shortName>
    </alternativeName>
</protein>